<keyword id="KW-0066">ATP synthesis</keyword>
<keyword id="KW-0067">ATP-binding</keyword>
<keyword id="KW-0139">CF(1)</keyword>
<keyword id="KW-0903">Direct protein sequencing</keyword>
<keyword id="KW-0375">Hydrogen ion transport</keyword>
<keyword id="KW-0406">Ion transport</keyword>
<keyword id="KW-0472">Membrane</keyword>
<keyword id="KW-0496">Mitochondrion</keyword>
<keyword id="KW-0999">Mitochondrion inner membrane</keyword>
<keyword id="KW-0547">Nucleotide-binding</keyword>
<keyword id="KW-1185">Reference proteome</keyword>
<keyword id="KW-0809">Transit peptide</keyword>
<keyword id="KW-1278">Translocase</keyword>
<keyword id="KW-0813">Transport</keyword>
<accession>P22068</accession>
<organism>
    <name type="scientific">Schizosaccharomyces pombe (strain 972 / ATCC 24843)</name>
    <name type="common">Fission yeast</name>
    <dbReference type="NCBI Taxonomy" id="284812"/>
    <lineage>
        <taxon>Eukaryota</taxon>
        <taxon>Fungi</taxon>
        <taxon>Dikarya</taxon>
        <taxon>Ascomycota</taxon>
        <taxon>Taphrinomycotina</taxon>
        <taxon>Schizosaccharomycetes</taxon>
        <taxon>Schizosaccharomycetales</taxon>
        <taxon>Schizosaccharomycetaceae</taxon>
        <taxon>Schizosaccharomyces</taxon>
    </lineage>
</organism>
<evidence type="ECO:0000250" key="1"/>
<evidence type="ECO:0000269" key="2">
    <source>
    </source>
</evidence>
<evidence type="ECO:0000305" key="3"/>
<proteinExistence type="evidence at protein level"/>
<gene>
    <name type="primary">atp2</name>
    <name type="ORF">SPAC222.12c</name>
</gene>
<protein>
    <recommendedName>
        <fullName>ATP synthase subunit beta, mitochondrial</fullName>
        <ecNumber>7.1.2.2</ecNumber>
    </recommendedName>
</protein>
<name>ATPB_SCHPO</name>
<sequence length="525" mass="56876">MLKKQALSGIRRFSLATKQSFVKTSYKLPRKSWLNTAKFNTIRYASTEAAKHNKGSIKQVIGAVVDCQFEDADSLPSILNALEVKLPDNKRLVLEVAQHVGENTVRTIAMDGTEGLVRGTAVIDTGSPISIPVGPGTLGRIMNVIGEPVDERGPIKAVKYSPIHADAPSFEEQSTTPEILETGIKVVDLLAPYARGGKIGLFGGAGVGKTVFIQELINNIAKAHGGYSVFTGVGERTREGNDLYREMQETGVIKLEGESKAALVFGQMNEPPGARARVALTGLTVAEYFRDIEGQDVLLFIDNIFRFTQAGSEVSALLGRIPSAVGYQPTLATDMGAMQERITTTKKGSITSVQAVYVPADDLTDPAPATTFAHLDATTVLSRSISELGIYPAVDPLDSKSRMMDPRILGEEHYNLAGSVQQMLQEYKSLQDIIAILGMDELSEADKLTVERARKVQRFLSQPFAVAEVFTGIEGRLVSLKDTIRSFKEILEGKHDSLPESAFYMVGSIDDAVKKAEKIAQELAA</sequence>
<comment type="function">
    <text>Mitochondrial membrane ATP synthase (F(1)F(0) ATP synthase or Complex V) produces ATP from ADP in the presence of a proton gradient across the membrane which is generated by electron transport complexes of the respiratory chain. F-type ATPases consist of two structural domains, F(1) - containing the extramembraneous catalytic core, and F(0) - containing the membrane proton channel, linked together by a central stalk and a peripheral stalk. During catalysis, ATP synthesis in the catalytic domain of F(1) is coupled via a rotary mechanism of the central stalk subunits to proton translocation. Subunits alpha and beta form the catalytic core in F(1). Rotation of the central stalk against the surrounding alpha(3)beta(3) subunits leads to hydrolysis of ATP in three separate catalytic sites on the beta subunits.</text>
</comment>
<comment type="catalytic activity">
    <reaction>
        <text>ATP + H2O + 4 H(+)(in) = ADP + phosphate + 5 H(+)(out)</text>
        <dbReference type="Rhea" id="RHEA:57720"/>
        <dbReference type="ChEBI" id="CHEBI:15377"/>
        <dbReference type="ChEBI" id="CHEBI:15378"/>
        <dbReference type="ChEBI" id="CHEBI:30616"/>
        <dbReference type="ChEBI" id="CHEBI:43474"/>
        <dbReference type="ChEBI" id="CHEBI:456216"/>
        <dbReference type="EC" id="7.1.2.2"/>
    </reaction>
</comment>
<comment type="subunit">
    <text>F-type ATPases have 2 components, CF(1) - the catalytic core - and CF(0) - the membrane proton channel. CF(1) has five subunits: alpha(3), beta(3), gamma(1), delta(1), epsilon(1). CF(0) has three main subunits: a, b and c.</text>
</comment>
<comment type="subcellular location">
    <subcellularLocation>
        <location>Mitochondrion</location>
    </subcellularLocation>
    <subcellularLocation>
        <location>Mitochondrion inner membrane</location>
    </subcellularLocation>
    <text>Peripheral membrane protein.</text>
</comment>
<comment type="similarity">
    <text evidence="3">Belongs to the ATPase alpha/beta chains family.</text>
</comment>
<dbReference type="EC" id="7.1.2.2"/>
<dbReference type="EMBL" id="CU329670">
    <property type="protein sequence ID" value="CAB60704.1"/>
    <property type="molecule type" value="Genomic_DNA"/>
</dbReference>
<dbReference type="PIR" id="S17211">
    <property type="entry name" value="S17211"/>
</dbReference>
<dbReference type="RefSeq" id="NP_593151.1">
    <property type="nucleotide sequence ID" value="NM_001018548.2"/>
</dbReference>
<dbReference type="SMR" id="P22068"/>
<dbReference type="BioGRID" id="278415">
    <property type="interactions" value="31"/>
</dbReference>
<dbReference type="ComplexPortal" id="CPX-25764">
    <property type="entry name" value="Mitochondrial proton translocating ATP synthase complex"/>
</dbReference>
<dbReference type="FunCoup" id="P22068">
    <property type="interactions" value="266"/>
</dbReference>
<dbReference type="STRING" id="284812.P22068"/>
<dbReference type="iPTMnet" id="P22068"/>
<dbReference type="PaxDb" id="4896-SPAC222.12c.1"/>
<dbReference type="EnsemblFungi" id="SPAC222.12c.1">
    <property type="protein sequence ID" value="SPAC222.12c.1:pep"/>
    <property type="gene ID" value="SPAC222.12c"/>
</dbReference>
<dbReference type="GeneID" id="2541927"/>
<dbReference type="KEGG" id="spo:2541927"/>
<dbReference type="PomBase" id="SPAC222.12c">
    <property type="gene designation" value="atp2"/>
</dbReference>
<dbReference type="VEuPathDB" id="FungiDB:SPAC222.12c"/>
<dbReference type="eggNOG" id="KOG1350">
    <property type="taxonomic scope" value="Eukaryota"/>
</dbReference>
<dbReference type="HOGENOM" id="CLU_022398_0_2_1"/>
<dbReference type="InParanoid" id="P22068"/>
<dbReference type="OMA" id="SMEEGGW"/>
<dbReference type="PhylomeDB" id="P22068"/>
<dbReference type="Reactome" id="R-SPO-9837999">
    <property type="pathway name" value="Mitochondrial protein degradation"/>
</dbReference>
<dbReference type="PRO" id="PR:P22068"/>
<dbReference type="Proteomes" id="UP000002485">
    <property type="component" value="Chromosome I"/>
</dbReference>
<dbReference type="GO" id="GO:0099617">
    <property type="term" value="C:matrix side of mitochondrial inner membrane"/>
    <property type="evidence" value="ECO:0000305"/>
    <property type="project" value="PomBase"/>
</dbReference>
<dbReference type="GO" id="GO:0005739">
    <property type="term" value="C:mitochondrion"/>
    <property type="evidence" value="ECO:0007005"/>
    <property type="project" value="PomBase"/>
</dbReference>
<dbReference type="GO" id="GO:0045259">
    <property type="term" value="C:proton-transporting ATP synthase complex"/>
    <property type="evidence" value="ECO:0000316"/>
    <property type="project" value="PomBase"/>
</dbReference>
<dbReference type="GO" id="GO:0043531">
    <property type="term" value="F:ADP binding"/>
    <property type="evidence" value="ECO:0000315"/>
    <property type="project" value="PomBase"/>
</dbReference>
<dbReference type="GO" id="GO:0005524">
    <property type="term" value="F:ATP binding"/>
    <property type="evidence" value="ECO:0007669"/>
    <property type="project" value="UniProtKB-KW"/>
</dbReference>
<dbReference type="GO" id="GO:0016887">
    <property type="term" value="F:ATP hydrolysis activity"/>
    <property type="evidence" value="ECO:0000305"/>
    <property type="project" value="PomBase"/>
</dbReference>
<dbReference type="GO" id="GO:0046933">
    <property type="term" value="F:proton-transporting ATP synthase activity, rotational mechanism"/>
    <property type="evidence" value="ECO:0000269"/>
    <property type="project" value="PomBase"/>
</dbReference>
<dbReference type="GO" id="GO:0042776">
    <property type="term" value="P:proton motive force-driven mitochondrial ATP synthesis"/>
    <property type="evidence" value="ECO:0000316"/>
    <property type="project" value="PomBase"/>
</dbReference>
<dbReference type="CDD" id="cd18110">
    <property type="entry name" value="ATP-synt_F1_beta_C"/>
    <property type="match status" value="1"/>
</dbReference>
<dbReference type="CDD" id="cd18115">
    <property type="entry name" value="ATP-synt_F1_beta_N"/>
    <property type="match status" value="1"/>
</dbReference>
<dbReference type="CDD" id="cd01133">
    <property type="entry name" value="F1-ATPase_beta_CD"/>
    <property type="match status" value="1"/>
</dbReference>
<dbReference type="FunFam" id="1.10.1140.10:FF:000001">
    <property type="entry name" value="ATP synthase subunit beta"/>
    <property type="match status" value="1"/>
</dbReference>
<dbReference type="FunFam" id="2.40.10.170:FF:000005">
    <property type="entry name" value="ATP synthase subunit beta"/>
    <property type="match status" value="1"/>
</dbReference>
<dbReference type="FunFam" id="3.40.50.300:FF:000026">
    <property type="entry name" value="ATP synthase subunit beta"/>
    <property type="match status" value="1"/>
</dbReference>
<dbReference type="Gene3D" id="2.40.10.170">
    <property type="match status" value="1"/>
</dbReference>
<dbReference type="Gene3D" id="1.10.1140.10">
    <property type="entry name" value="Bovine Mitochondrial F1-atpase, Atp Synthase Beta Chain, Chain D, domain 3"/>
    <property type="match status" value="1"/>
</dbReference>
<dbReference type="Gene3D" id="3.40.50.300">
    <property type="entry name" value="P-loop containing nucleotide triphosphate hydrolases"/>
    <property type="match status" value="1"/>
</dbReference>
<dbReference type="HAMAP" id="MF_01347">
    <property type="entry name" value="ATP_synth_beta_bact"/>
    <property type="match status" value="1"/>
</dbReference>
<dbReference type="InterPro" id="IPR003593">
    <property type="entry name" value="AAA+_ATPase"/>
</dbReference>
<dbReference type="InterPro" id="IPR055190">
    <property type="entry name" value="ATP-synt_VA_C"/>
</dbReference>
<dbReference type="InterPro" id="IPR005722">
    <property type="entry name" value="ATP_synth_F1_bsu"/>
</dbReference>
<dbReference type="InterPro" id="IPR020003">
    <property type="entry name" value="ATPase_a/bsu_AS"/>
</dbReference>
<dbReference type="InterPro" id="IPR050053">
    <property type="entry name" value="ATPase_alpha/beta_chains"/>
</dbReference>
<dbReference type="InterPro" id="IPR004100">
    <property type="entry name" value="ATPase_F1/V1/A1_a/bsu_N"/>
</dbReference>
<dbReference type="InterPro" id="IPR036121">
    <property type="entry name" value="ATPase_F1/V1/A1_a/bsu_N_sf"/>
</dbReference>
<dbReference type="InterPro" id="IPR000194">
    <property type="entry name" value="ATPase_F1/V1/A1_a/bsu_nucl-bd"/>
</dbReference>
<dbReference type="InterPro" id="IPR024034">
    <property type="entry name" value="ATPase_F1/V1_b/a_C"/>
</dbReference>
<dbReference type="InterPro" id="IPR027417">
    <property type="entry name" value="P-loop_NTPase"/>
</dbReference>
<dbReference type="NCBIfam" id="TIGR01039">
    <property type="entry name" value="atpD"/>
    <property type="match status" value="1"/>
</dbReference>
<dbReference type="PANTHER" id="PTHR15184">
    <property type="entry name" value="ATP SYNTHASE"/>
    <property type="match status" value="1"/>
</dbReference>
<dbReference type="PANTHER" id="PTHR15184:SF71">
    <property type="entry name" value="ATP SYNTHASE SUBUNIT BETA, MITOCHONDRIAL"/>
    <property type="match status" value="1"/>
</dbReference>
<dbReference type="Pfam" id="PF00006">
    <property type="entry name" value="ATP-synt_ab"/>
    <property type="match status" value="1"/>
</dbReference>
<dbReference type="Pfam" id="PF02874">
    <property type="entry name" value="ATP-synt_ab_N"/>
    <property type="match status" value="1"/>
</dbReference>
<dbReference type="Pfam" id="PF22919">
    <property type="entry name" value="ATP-synt_VA_C"/>
    <property type="match status" value="1"/>
</dbReference>
<dbReference type="PIRSF" id="PIRSF039072">
    <property type="entry name" value="ATPase_subunit_beta"/>
    <property type="match status" value="1"/>
</dbReference>
<dbReference type="SMART" id="SM00382">
    <property type="entry name" value="AAA"/>
    <property type="match status" value="1"/>
</dbReference>
<dbReference type="SUPFAM" id="SSF47917">
    <property type="entry name" value="C-terminal domain of alpha and beta subunits of F1 ATP synthase"/>
    <property type="match status" value="1"/>
</dbReference>
<dbReference type="SUPFAM" id="SSF50615">
    <property type="entry name" value="N-terminal domain of alpha and beta subunits of F1 ATP synthase"/>
    <property type="match status" value="1"/>
</dbReference>
<dbReference type="SUPFAM" id="SSF52540">
    <property type="entry name" value="P-loop containing nucleoside triphosphate hydrolases"/>
    <property type="match status" value="1"/>
</dbReference>
<dbReference type="PROSITE" id="PS00152">
    <property type="entry name" value="ATPASE_ALPHA_BETA"/>
    <property type="match status" value="1"/>
</dbReference>
<feature type="transit peptide" description="Mitochondrion" evidence="2">
    <location>
        <begin position="1"/>
        <end position="44"/>
    </location>
</feature>
<feature type="chain" id="PRO_0000002453" description="ATP synthase subunit beta, mitochondrial">
    <location>
        <begin position="45"/>
        <end position="525"/>
    </location>
</feature>
<feature type="binding site" evidence="1">
    <location>
        <begin position="203"/>
        <end position="210"/>
    </location>
    <ligand>
        <name>ATP</name>
        <dbReference type="ChEBI" id="CHEBI:30616"/>
    </ligand>
</feature>
<reference key="1">
    <citation type="journal article" date="1991" name="Eur. J. Biochem.">
        <title>Beta subunit of mitochondrial F1-ATPase from the fission yeast. Deduced sequence of the wild type protein and identification of a mutation that increases nucleotide binding.</title>
        <authorList>
            <person name="Falson P."/>
            <person name="Leterme S."/>
            <person name="Boutry M."/>
        </authorList>
    </citation>
    <scope>NUCLEOTIDE SEQUENCE [GENOMIC DNA]</scope>
    <scope>PROTEIN SEQUENCE OF 45-64</scope>
    <source>
        <strain>972 / ATCC 24843</strain>
    </source>
</reference>
<reference key="2">
    <citation type="journal article" date="2002" name="Nature">
        <title>The genome sequence of Schizosaccharomyces pombe.</title>
        <authorList>
            <person name="Wood V."/>
            <person name="Gwilliam R."/>
            <person name="Rajandream M.A."/>
            <person name="Lyne M.H."/>
            <person name="Lyne R."/>
            <person name="Stewart A."/>
            <person name="Sgouros J.G."/>
            <person name="Peat N."/>
            <person name="Hayles J."/>
            <person name="Baker S.G."/>
            <person name="Basham D."/>
            <person name="Bowman S."/>
            <person name="Brooks K."/>
            <person name="Brown D."/>
            <person name="Brown S."/>
            <person name="Chillingworth T."/>
            <person name="Churcher C.M."/>
            <person name="Collins M."/>
            <person name="Connor R."/>
            <person name="Cronin A."/>
            <person name="Davis P."/>
            <person name="Feltwell T."/>
            <person name="Fraser A."/>
            <person name="Gentles S."/>
            <person name="Goble A."/>
            <person name="Hamlin N."/>
            <person name="Harris D.E."/>
            <person name="Hidalgo J."/>
            <person name="Hodgson G."/>
            <person name="Holroyd S."/>
            <person name="Hornsby T."/>
            <person name="Howarth S."/>
            <person name="Huckle E.J."/>
            <person name="Hunt S."/>
            <person name="Jagels K."/>
            <person name="James K.D."/>
            <person name="Jones L."/>
            <person name="Jones M."/>
            <person name="Leather S."/>
            <person name="McDonald S."/>
            <person name="McLean J."/>
            <person name="Mooney P."/>
            <person name="Moule S."/>
            <person name="Mungall K.L."/>
            <person name="Murphy L.D."/>
            <person name="Niblett D."/>
            <person name="Odell C."/>
            <person name="Oliver K."/>
            <person name="O'Neil S."/>
            <person name="Pearson D."/>
            <person name="Quail M.A."/>
            <person name="Rabbinowitsch E."/>
            <person name="Rutherford K.M."/>
            <person name="Rutter S."/>
            <person name="Saunders D."/>
            <person name="Seeger K."/>
            <person name="Sharp S."/>
            <person name="Skelton J."/>
            <person name="Simmonds M.N."/>
            <person name="Squares R."/>
            <person name="Squares S."/>
            <person name="Stevens K."/>
            <person name="Taylor K."/>
            <person name="Taylor R.G."/>
            <person name="Tivey A."/>
            <person name="Walsh S.V."/>
            <person name="Warren T."/>
            <person name="Whitehead S."/>
            <person name="Woodward J.R."/>
            <person name="Volckaert G."/>
            <person name="Aert R."/>
            <person name="Robben J."/>
            <person name="Grymonprez B."/>
            <person name="Weltjens I."/>
            <person name="Vanstreels E."/>
            <person name="Rieger M."/>
            <person name="Schaefer M."/>
            <person name="Mueller-Auer S."/>
            <person name="Gabel C."/>
            <person name="Fuchs M."/>
            <person name="Duesterhoeft A."/>
            <person name="Fritzc C."/>
            <person name="Holzer E."/>
            <person name="Moestl D."/>
            <person name="Hilbert H."/>
            <person name="Borzym K."/>
            <person name="Langer I."/>
            <person name="Beck A."/>
            <person name="Lehrach H."/>
            <person name="Reinhardt R."/>
            <person name="Pohl T.M."/>
            <person name="Eger P."/>
            <person name="Zimmermann W."/>
            <person name="Wedler H."/>
            <person name="Wambutt R."/>
            <person name="Purnelle B."/>
            <person name="Goffeau A."/>
            <person name="Cadieu E."/>
            <person name="Dreano S."/>
            <person name="Gloux S."/>
            <person name="Lelaure V."/>
            <person name="Mottier S."/>
            <person name="Galibert F."/>
            <person name="Aves S.J."/>
            <person name="Xiang Z."/>
            <person name="Hunt C."/>
            <person name="Moore K."/>
            <person name="Hurst S.M."/>
            <person name="Lucas M."/>
            <person name="Rochet M."/>
            <person name="Gaillardin C."/>
            <person name="Tallada V.A."/>
            <person name="Garzon A."/>
            <person name="Thode G."/>
            <person name="Daga R.R."/>
            <person name="Cruzado L."/>
            <person name="Jimenez J."/>
            <person name="Sanchez M."/>
            <person name="del Rey F."/>
            <person name="Benito J."/>
            <person name="Dominguez A."/>
            <person name="Revuelta J.L."/>
            <person name="Moreno S."/>
            <person name="Armstrong J."/>
            <person name="Forsburg S.L."/>
            <person name="Cerutti L."/>
            <person name="Lowe T."/>
            <person name="McCombie W.R."/>
            <person name="Paulsen I."/>
            <person name="Potashkin J."/>
            <person name="Shpakovski G.V."/>
            <person name="Ussery D."/>
            <person name="Barrell B.G."/>
            <person name="Nurse P."/>
        </authorList>
    </citation>
    <scope>NUCLEOTIDE SEQUENCE [LARGE SCALE GENOMIC DNA]</scope>
    <source>
        <strain>972 / ATCC 24843</strain>
    </source>
</reference>